<reference key="1">
    <citation type="submission" date="2006-10" db="EMBL/GenBank/DDBJ databases">
        <authorList>
            <consortium name="Sanger Xenopus tropicalis EST/cDNA project"/>
        </authorList>
    </citation>
    <scope>NUCLEOTIDE SEQUENCE [LARGE SCALE MRNA]</scope>
    <source>
        <tissue>Egg</tissue>
    </source>
</reference>
<reference key="2">
    <citation type="submission" date="2004-07" db="EMBL/GenBank/DDBJ databases">
        <authorList>
            <consortium name="NIH - Xenopus Gene Collection (XGC) project"/>
        </authorList>
    </citation>
    <scope>NUCLEOTIDE SEQUENCE [LARGE SCALE MRNA]</scope>
    <source>
        <tissue>Embryo</tissue>
    </source>
</reference>
<protein>
    <recommendedName>
        <fullName evidence="2">tRNA (guanine-N(7)-)-methyltransferase A</fullName>
        <ecNumber evidence="2">2.1.1.33</ecNumber>
    </recommendedName>
    <alternativeName>
        <fullName evidence="2">Methyltransferase-like protein 1-A</fullName>
    </alternativeName>
    <alternativeName>
        <fullName evidence="2">mRNA (guanine-N(7)-)-methyltransferase</fullName>
        <ecNumber evidence="2">2.1.1.-</ecNumber>
    </alternativeName>
    <alternativeName>
        <fullName evidence="2">miRNA (guanine-N(7)-)-methyltransferase</fullName>
        <ecNumber evidence="2">2.1.1.-</ecNumber>
    </alternativeName>
    <alternativeName>
        <fullName evidence="2">tRNA (guanine(46)-N(7))-methyltransferase A</fullName>
    </alternativeName>
    <alternativeName>
        <fullName evidence="2">tRNA(m7G46)-methyltransferase A</fullName>
    </alternativeName>
</protein>
<evidence type="ECO:0000250" key="1">
    <source>
        <dbReference type="UniProtKB" id="Q5XJ57"/>
    </source>
</evidence>
<evidence type="ECO:0000255" key="2">
    <source>
        <dbReference type="HAMAP-Rule" id="MF_03055"/>
    </source>
</evidence>
<evidence type="ECO:0000305" key="3"/>
<keyword id="KW-0489">Methyltransferase</keyword>
<keyword id="KW-0539">Nucleus</keyword>
<keyword id="KW-1185">Reference proteome</keyword>
<keyword id="KW-0694">RNA-binding</keyword>
<keyword id="KW-0949">S-adenosyl-L-methionine</keyword>
<keyword id="KW-0808">Transferase</keyword>
<keyword id="KW-0819">tRNA processing</keyword>
<keyword id="KW-0820">tRNA-binding</keyword>
<sequence length="273" mass="31697">MCNTQATPSDPGITVAHPKKRYYRQRAHSNPMADHTFQYPVKPEIMDWSEYYPDYFKPLVPDSAHDDAKDLQERKEQHQVEFADIGCGYGGLLVELSPLFPNTLMLGLEIRVKVSDYVQDRIKSLRASHLGQYQNIACIRSNAMKYIPNFFKKGQLSKMFFLFPDPHFKKTKHKWRIISPTLLAEYAYVLRIGGMVYTITDVEEVHTWMVKHFTEHPLFERVAKEELVNDIVVGKLGTSTEEGKKVQRNKGLNLLAVFRRIENSTFIQRDSQQ</sequence>
<gene>
    <name type="primary">mettl1-A</name>
    <name type="ORF">TEgg045g13.1</name>
</gene>
<organism>
    <name type="scientific">Xenopus tropicalis</name>
    <name type="common">Western clawed frog</name>
    <name type="synonym">Silurana tropicalis</name>
    <dbReference type="NCBI Taxonomy" id="8364"/>
    <lineage>
        <taxon>Eukaryota</taxon>
        <taxon>Metazoa</taxon>
        <taxon>Chordata</taxon>
        <taxon>Craniata</taxon>
        <taxon>Vertebrata</taxon>
        <taxon>Euteleostomi</taxon>
        <taxon>Amphibia</taxon>
        <taxon>Batrachia</taxon>
        <taxon>Anura</taxon>
        <taxon>Pipoidea</taxon>
        <taxon>Pipidae</taxon>
        <taxon>Xenopodinae</taxon>
        <taxon>Xenopus</taxon>
        <taxon>Silurana</taxon>
    </lineage>
</organism>
<accession>Q28H76</accession>
<accession>Q6DFR8</accession>
<proteinExistence type="evidence at transcript level"/>
<comment type="function">
    <text evidence="1">Catalytic component of METTL1-WDR4 methyltransferase complex that mediates the formation of N(7)-methylguanine in a subset of RNA species, such as tRNAs, mRNAs and microRNAs (miRNAs). Catalyzes the formation of N(7)-methylguanine at position 46 (m7G46) in a large subset of tRNAs that contain the 5'-RAGGU-3' motif within the variable loop. M7G46 interacts with C13-G22 in the D-loop to stabilize tRNA tertiary structure and protect tRNAs from decay. Also acts as a methyltransferase for a subset of internal N(7)-methylguanine in mRNAs. Internal N(7)-methylguanine methylation of mRNAs in response to stress promotes their relocalization to stress granules, thereby suppressing their translation. Also methylates a specific subset of miRNAs.</text>
</comment>
<comment type="catalytic activity">
    <reaction evidence="2">
        <text>guanosine(46) in tRNA + S-adenosyl-L-methionine = N(7)-methylguanosine(46) in tRNA + S-adenosyl-L-homocysteine</text>
        <dbReference type="Rhea" id="RHEA:42708"/>
        <dbReference type="Rhea" id="RHEA-COMP:10188"/>
        <dbReference type="Rhea" id="RHEA-COMP:10189"/>
        <dbReference type="ChEBI" id="CHEBI:57856"/>
        <dbReference type="ChEBI" id="CHEBI:59789"/>
        <dbReference type="ChEBI" id="CHEBI:74269"/>
        <dbReference type="ChEBI" id="CHEBI:74480"/>
        <dbReference type="EC" id="2.1.1.33"/>
    </reaction>
</comment>
<comment type="catalytic activity">
    <reaction evidence="2">
        <text>a guanosine in mRNA + S-adenosyl-L-methionine = an N(7)-methylguanosine in mRNA + S-adenosyl-L-homocysteine</text>
        <dbReference type="Rhea" id="RHEA:60508"/>
        <dbReference type="Rhea" id="RHEA-COMP:15584"/>
        <dbReference type="Rhea" id="RHEA-COMP:15585"/>
        <dbReference type="ChEBI" id="CHEBI:57856"/>
        <dbReference type="ChEBI" id="CHEBI:59789"/>
        <dbReference type="ChEBI" id="CHEBI:74269"/>
        <dbReference type="ChEBI" id="CHEBI:74480"/>
    </reaction>
    <physiologicalReaction direction="left-to-right" evidence="2">
        <dbReference type="Rhea" id="RHEA:60509"/>
    </physiologicalReaction>
</comment>
<comment type="catalytic activity">
    <reaction evidence="2">
        <text>a guanosine in miRNA + S-adenosyl-L-methionine = an N(7)-methylguanosine in miRNA + S-adenosyl-L-homocysteine</text>
        <dbReference type="Rhea" id="RHEA:60512"/>
        <dbReference type="Rhea" id="RHEA-COMP:15587"/>
        <dbReference type="Rhea" id="RHEA-COMP:15588"/>
        <dbReference type="ChEBI" id="CHEBI:57856"/>
        <dbReference type="ChEBI" id="CHEBI:59789"/>
        <dbReference type="ChEBI" id="CHEBI:74269"/>
        <dbReference type="ChEBI" id="CHEBI:74480"/>
    </reaction>
    <physiologicalReaction direction="left-to-right" evidence="2">
        <dbReference type="Rhea" id="RHEA:60513"/>
    </physiologicalReaction>
</comment>
<comment type="pathway">
    <text evidence="2">tRNA modification; N(7)-methylguanine-tRNA biosynthesis.</text>
</comment>
<comment type="subunit">
    <text evidence="2">Catalytic component of the METTL1-WDR4 complex, composed of mettl1 and wdr4.</text>
</comment>
<comment type="subcellular location">
    <subcellularLocation>
        <location evidence="2">Nucleus</location>
    </subcellularLocation>
</comment>
<comment type="similarity">
    <text evidence="2">Belongs to the class I-like SAM-binding methyltransferase superfamily. TrmB family.</text>
</comment>
<comment type="sequence caution" evidence="3">
    <conflict type="erroneous initiation">
        <sequence resource="EMBL-CDS" id="AAH76665"/>
    </conflict>
</comment>
<comment type="sequence caution" evidence="3">
    <conflict type="erroneous initiation">
        <sequence resource="EMBL-CDS" id="CAJ83619"/>
    </conflict>
</comment>
<feature type="chain" id="PRO_0000370560" description="tRNA (guanine-N(7)-)-methyltransferase A">
    <location>
        <begin position="1"/>
        <end position="273"/>
    </location>
</feature>
<feature type="region of interest" description="AlphaC helix" evidence="2">
    <location>
        <begin position="166"/>
        <end position="174"/>
    </location>
</feature>
<feature type="region of interest" description="Alpha6 helix" evidence="2">
    <location>
        <begin position="240"/>
        <end position="248"/>
    </location>
</feature>
<feature type="active site" evidence="2">
    <location>
        <position position="165"/>
    </location>
</feature>
<feature type="binding site" evidence="2">
    <location>
        <position position="86"/>
    </location>
    <ligand>
        <name>S-adenosyl-L-methionine</name>
        <dbReference type="ChEBI" id="CHEBI:59789"/>
    </ligand>
</feature>
<feature type="binding site" evidence="2">
    <location>
        <position position="109"/>
    </location>
    <ligand>
        <name>S-adenosyl-L-methionine</name>
        <dbReference type="ChEBI" id="CHEBI:59789"/>
    </ligand>
</feature>
<feature type="binding site" evidence="2">
    <location>
        <position position="111"/>
    </location>
    <ligand>
        <name>S-adenosyl-L-methionine</name>
        <dbReference type="ChEBI" id="CHEBI:59789"/>
    </ligand>
</feature>
<feature type="binding site" evidence="2">
    <location>
        <position position="142"/>
    </location>
    <ligand>
        <name>S-adenosyl-L-methionine</name>
        <dbReference type="ChEBI" id="CHEBI:59789"/>
    </ligand>
</feature>
<feature type="binding site" evidence="2">
    <location>
        <position position="143"/>
    </location>
    <ligand>
        <name>S-adenosyl-L-methionine</name>
        <dbReference type="ChEBI" id="CHEBI:59789"/>
    </ligand>
</feature>
<feature type="binding site" evidence="2">
    <location>
        <position position="162"/>
    </location>
    <ligand>
        <name>S-adenosyl-L-methionine</name>
        <dbReference type="ChEBI" id="CHEBI:59789"/>
    </ligand>
</feature>
<feature type="binding site" evidence="2">
    <location>
        <position position="240"/>
    </location>
    <ligand>
        <name>S-adenosyl-L-methionine</name>
        <dbReference type="ChEBI" id="CHEBI:59789"/>
    </ligand>
</feature>
<feature type="binding site" evidence="2">
    <location>
        <position position="242"/>
    </location>
    <ligand>
        <name>S-adenosyl-L-methionine</name>
        <dbReference type="ChEBI" id="CHEBI:59789"/>
    </ligand>
</feature>
<feature type="sequence conflict" description="In Ref. 2; AAH76665." evidence="3" ref="2">
    <original>N</original>
    <variation>S</variation>
    <location>
        <position position="149"/>
    </location>
</feature>
<name>TRMBA_XENTR</name>
<dbReference type="EC" id="2.1.1.33" evidence="2"/>
<dbReference type="EC" id="2.1.1.-" evidence="2"/>
<dbReference type="EMBL" id="CR761007">
    <property type="protein sequence ID" value="CAJ83619.1"/>
    <property type="status" value="ALT_INIT"/>
    <property type="molecule type" value="mRNA"/>
</dbReference>
<dbReference type="EMBL" id="BC076665">
    <property type="protein sequence ID" value="AAH76665.1"/>
    <property type="status" value="ALT_INIT"/>
    <property type="molecule type" value="mRNA"/>
</dbReference>
<dbReference type="RefSeq" id="NP_001006798.2">
    <property type="nucleotide sequence ID" value="NM_001006797.2"/>
</dbReference>
<dbReference type="SMR" id="Q28H76"/>
<dbReference type="FunCoup" id="Q28H76">
    <property type="interactions" value="1508"/>
</dbReference>
<dbReference type="STRING" id="8364.ENSXETP00000014501"/>
<dbReference type="PaxDb" id="8364-ENSXETP00000021255"/>
<dbReference type="DNASU" id="448504"/>
<dbReference type="GeneID" id="448504"/>
<dbReference type="KEGG" id="xtr:448504"/>
<dbReference type="AGR" id="Xenbase:XB-GENE-1000662"/>
<dbReference type="CTD" id="4234"/>
<dbReference type="Xenbase" id="XB-GENE-1000662">
    <property type="gene designation" value="mettl1"/>
</dbReference>
<dbReference type="eggNOG" id="KOG3115">
    <property type="taxonomic scope" value="Eukaryota"/>
</dbReference>
<dbReference type="HOGENOM" id="CLU_050910_3_1_1"/>
<dbReference type="InParanoid" id="Q28H76"/>
<dbReference type="OrthoDB" id="47276at2759"/>
<dbReference type="TreeFam" id="TF314083"/>
<dbReference type="UniPathway" id="UPA00989"/>
<dbReference type="Proteomes" id="UP000008143">
    <property type="component" value="Chromosome 2"/>
</dbReference>
<dbReference type="GO" id="GO:0005634">
    <property type="term" value="C:nucleus"/>
    <property type="evidence" value="ECO:0000250"/>
    <property type="project" value="UniProtKB"/>
</dbReference>
<dbReference type="GO" id="GO:0106143">
    <property type="term" value="C:tRNA (m7G46) methyltransferase complex"/>
    <property type="evidence" value="ECO:0000250"/>
    <property type="project" value="UniProtKB"/>
</dbReference>
<dbReference type="GO" id="GO:0160090">
    <property type="term" value="F:internal mRNA (guanine-N7-)-methyltransferase activity"/>
    <property type="evidence" value="ECO:0007669"/>
    <property type="project" value="RHEA"/>
</dbReference>
<dbReference type="GO" id="GO:0008176">
    <property type="term" value="F:tRNA (guanine(46)-N7)-methyltransferase activity"/>
    <property type="evidence" value="ECO:0000250"/>
    <property type="project" value="UniProtKB"/>
</dbReference>
<dbReference type="GO" id="GO:0000049">
    <property type="term" value="F:tRNA binding"/>
    <property type="evidence" value="ECO:0007669"/>
    <property type="project" value="UniProtKB-UniRule"/>
</dbReference>
<dbReference type="GO" id="GO:0106004">
    <property type="term" value="P:tRNA (guanine-N7)-methylation"/>
    <property type="evidence" value="ECO:0000250"/>
    <property type="project" value="UniProtKB"/>
</dbReference>
<dbReference type="GO" id="GO:0006400">
    <property type="term" value="P:tRNA modification"/>
    <property type="evidence" value="ECO:0000250"/>
    <property type="project" value="UniProtKB"/>
</dbReference>
<dbReference type="FunFam" id="3.40.50.150:FF:000060">
    <property type="entry name" value="tRNA (guanine-N(7)-)-methyltransferase"/>
    <property type="match status" value="1"/>
</dbReference>
<dbReference type="Gene3D" id="3.40.50.150">
    <property type="entry name" value="Vaccinia Virus protein VP39"/>
    <property type="match status" value="1"/>
</dbReference>
<dbReference type="HAMAP" id="MF_03055">
    <property type="entry name" value="tRNA_methyltr_TrmB_euk"/>
    <property type="match status" value="1"/>
</dbReference>
<dbReference type="InterPro" id="IPR029063">
    <property type="entry name" value="SAM-dependent_MTases_sf"/>
</dbReference>
<dbReference type="InterPro" id="IPR025763">
    <property type="entry name" value="Trm8_euk"/>
</dbReference>
<dbReference type="InterPro" id="IPR003358">
    <property type="entry name" value="tRNA_(Gua-N-7)_MeTrfase_Trmb"/>
</dbReference>
<dbReference type="NCBIfam" id="TIGR00091">
    <property type="entry name" value="tRNA (guanosine(46)-N7)-methyltransferase TrmB"/>
    <property type="match status" value="1"/>
</dbReference>
<dbReference type="PANTHER" id="PTHR23417">
    <property type="entry name" value="3-DEOXY-D-MANNO-OCTULOSONIC-ACID TRANSFERASE/TRNA GUANINE-N 7 - -METHYLTRANSFERASE"/>
    <property type="match status" value="1"/>
</dbReference>
<dbReference type="PANTHER" id="PTHR23417:SF25">
    <property type="entry name" value="TRNA (GUANINE-N(7)-)-METHYLTRANSFERASE A"/>
    <property type="match status" value="1"/>
</dbReference>
<dbReference type="Pfam" id="PF02390">
    <property type="entry name" value="Methyltransf_4"/>
    <property type="match status" value="1"/>
</dbReference>
<dbReference type="SUPFAM" id="SSF53335">
    <property type="entry name" value="S-adenosyl-L-methionine-dependent methyltransferases"/>
    <property type="match status" value="1"/>
</dbReference>
<dbReference type="PROSITE" id="PS51625">
    <property type="entry name" value="SAM_MT_TRMB"/>
    <property type="match status" value="1"/>
</dbReference>